<organism>
    <name type="scientific">Homo sapiens</name>
    <name type="common">Human</name>
    <dbReference type="NCBI Taxonomy" id="9606"/>
    <lineage>
        <taxon>Eukaryota</taxon>
        <taxon>Metazoa</taxon>
        <taxon>Chordata</taxon>
        <taxon>Craniata</taxon>
        <taxon>Vertebrata</taxon>
        <taxon>Euteleostomi</taxon>
        <taxon>Mammalia</taxon>
        <taxon>Eutheria</taxon>
        <taxon>Euarchontoglires</taxon>
        <taxon>Primates</taxon>
        <taxon>Haplorrhini</taxon>
        <taxon>Catarrhini</taxon>
        <taxon>Hominidae</taxon>
        <taxon>Homo</taxon>
    </lineage>
</organism>
<evidence type="ECO:0000250" key="1">
    <source>
        <dbReference type="UniProtKB" id="Q9R269"/>
    </source>
</evidence>
<evidence type="ECO:0000255" key="2"/>
<evidence type="ECO:0000255" key="3">
    <source>
        <dbReference type="PROSITE-ProRule" id="PRU00192"/>
    </source>
</evidence>
<evidence type="ECO:0000269" key="4">
    <source>
    </source>
</evidence>
<evidence type="ECO:0000269" key="5">
    <source>
    </source>
</evidence>
<evidence type="ECO:0000269" key="6">
    <source>
    </source>
</evidence>
<evidence type="ECO:0000269" key="7">
    <source>
    </source>
</evidence>
<evidence type="ECO:0000269" key="8">
    <source>
    </source>
</evidence>
<evidence type="ECO:0000269" key="9">
    <source>
    </source>
</evidence>
<evidence type="ECO:0000269" key="10">
    <source>
    </source>
</evidence>
<evidence type="ECO:0000269" key="11">
    <source>
    </source>
</evidence>
<evidence type="ECO:0000269" key="12">
    <source ref="5"/>
</evidence>
<evidence type="ECO:0000305" key="13"/>
<evidence type="ECO:0007744" key="14">
    <source>
    </source>
</evidence>
<evidence type="ECO:0007744" key="15">
    <source>
    </source>
</evidence>
<evidence type="ECO:0007744" key="16">
    <source>
    </source>
</evidence>
<evidence type="ECO:0007829" key="17">
    <source>
        <dbReference type="PDB" id="4Q28"/>
    </source>
</evidence>
<gene>
    <name type="primary">PPL</name>
    <name type="synonym">KIAA0568</name>
</gene>
<sequence length="1756" mass="204747">MNSLFRKRNKGKYSPTVQTRSISNKELSELIEQLQKNADQVEKNIVDTEAKMQSDLARLQEGRQPEHRDVTLQKVLDSEKLLYVLEADAAIAKHMKHPQGDMIAEDIRQLKERVTNLRGKHKQIYRLAVKEVDPQVNWAALVEEKLDKLNNQSFGTDLPLVDHQVEEHNIFHNEVKAIGPHLAKDGDKEQNSELRAKYQKLLAASQARQQHLSSLQDYMQRCTNELYWLDQQAKGRMQYDWSDRNLDYPSRRRQYENFINRNLEAKEERINKLHSEGDQLLAAEHPGRNSIEAHMEAVHADWKEYLNLLICEESHLKYMEDYHQFHEDVKDAQELLRKVDSDLNQKYGPDFKDRYQIELLLRELDDQEKVLDKYEDVVQGLQKRGQQVVPLKYRRETPLKPIPVEALCDFEGEQGLISRGYSYTLQKNNGESWELMDSAGNKLIAPAVCFVIPPTDPEALALADSLGSQYRSVRQKAAGSKRTLQQRYEVLKTENPGDASDLQGRQLLAGLDKVASDLDRQEKAITGILRPPLEQGRAVQDSAERAKDLKNITNELLRIEPEKTRSTAEGEAFIQALPGSGTTPLLRTRVEDTNRKYEHLLQLLDLAQEKVDVANRLEKSLQQSWELLATHENHLNQDDTVPESSRVLDSKGQELAAMACELQAQKSLLGEVEQNLQAAKQCSSTLASRFQEHCPDLERQEAEVHKLGQRFNNLRQQVERRAQSLQSAKAAYEHFHRGHDHVLQFLVSIPSYEPQETDSLSQMETKLKNQKNLLDEIASREQEVQKICANSQQYQQAVKDYELEAEKLRSLLDLENGRRSHVSKRARLQSPATKVKEEEAALAAKFTEVYAINRQRLQNLEFALNLLRQQPEVEVTHETLQRNRPDSGVEEAWKIRKELDEETERRRQLENEVKSTQEEIWTLRNQGPQESVVRKEVLKKVPDPVLEESFQQLQRTLAEEQHKNQLLQEELEALQLQLRALEQETRDGGQEYVVKEVLRIEPDRAQADEVLQLREELEALRRQKGAREAEVLLLQQRVAALAEEKSRAQEKVTEKEVVKLQNDPQLEAEYQQLQEDHQRQDQLREKQEEELSFLQDKLKRLEKERAMAEGKITVKEVLKVEKDAATEREVSDLTRQYEDEAAKARASQREKTELLRKIWALEEENAKVVVQEKVREIVRPDPKAESEVANLRLELVEQERKYRGAEEQLRSYQSELEALRRRGPQVEVKEVTKEVIKYKTDPEMEKELQRLREEIVDKTRLIERCDLEIYQLKKEIQALKDTKPQVQTKEVVQEILQFQEDPQTKEEVASLRAKLSEEQKKQVDLERERASQEEQIARKEEELSRVKERVVQQEVVRYEEEPGLRAEASAFAESIDVELRQIDKLRAELRRLQRRRTELERQLEELERERQARREAEREVQRLQQRLAALEQEEAEAREKVTHTQKVVLQQDPQQAREHALLRLQLEEEQHRRQLLEGELETLRRKLAALEKAEVKEKVVLSESVQVEKGDTEQEIQRLKSSLEEESRSKRELDVEVSRLEARLSELEFHNSKSSKELDFLREENHKLQLERQNLQLETRRLQSEINMAATETRDLRNMTVADSGTNHDSRLWSLERELDDLKRLSKDKDLEIDELQKRLGSVAVKREQRENHLRRSIVVIHPDTGRELSPEEAHRAGLIDWNMFVKLRSQECDWEEISVKGPNGESSVIHDRKSGKKFSIEEALQSGRLTPAQYDRYVNKDMSIQELAVLVSGQK</sequence>
<protein>
    <recommendedName>
        <fullName>Periplakin</fullName>
    </recommendedName>
    <alternativeName>
        <fullName>190 kDa paraneoplastic pemphigus antigen</fullName>
    </alternativeName>
    <alternativeName>
        <fullName>195 kDa cornified envelope precursor protein</fullName>
    </alternativeName>
</protein>
<name>PEPL_HUMAN</name>
<proteinExistence type="evidence at protein level"/>
<dbReference type="EMBL" id="AF001691">
    <property type="protein sequence ID" value="AAC17738.1"/>
    <property type="molecule type" value="mRNA"/>
</dbReference>
<dbReference type="EMBL" id="AF013717">
    <property type="protein sequence ID" value="AAC39668.1"/>
    <property type="molecule type" value="mRNA"/>
</dbReference>
<dbReference type="EMBL" id="AF041004">
    <property type="protein sequence ID" value="AAD17459.1"/>
    <property type="molecule type" value="Genomic_DNA"/>
</dbReference>
<dbReference type="EMBL" id="AF040999">
    <property type="protein sequence ID" value="AAD17459.1"/>
    <property type="status" value="JOINED"/>
    <property type="molecule type" value="Genomic_DNA"/>
</dbReference>
<dbReference type="EMBL" id="AF041000">
    <property type="protein sequence ID" value="AAD17459.1"/>
    <property type="status" value="JOINED"/>
    <property type="molecule type" value="Genomic_DNA"/>
</dbReference>
<dbReference type="EMBL" id="AF041002">
    <property type="protein sequence ID" value="AAD17459.1"/>
    <property type="status" value="JOINED"/>
    <property type="molecule type" value="Genomic_DNA"/>
</dbReference>
<dbReference type="EMBL" id="AF041003">
    <property type="protein sequence ID" value="AAD17459.1"/>
    <property type="status" value="JOINED"/>
    <property type="molecule type" value="Genomic_DNA"/>
</dbReference>
<dbReference type="EMBL" id="AC027687">
    <property type="status" value="NOT_ANNOTATED_CDS"/>
    <property type="molecule type" value="Genomic_DNA"/>
</dbReference>
<dbReference type="EMBL" id="CH471112">
    <property type="protein sequence ID" value="EAW85248.1"/>
    <property type="molecule type" value="Genomic_DNA"/>
</dbReference>
<dbReference type="EMBL" id="BC114620">
    <property type="protein sequence ID" value="AAI14621.1"/>
    <property type="molecule type" value="mRNA"/>
</dbReference>
<dbReference type="EMBL" id="AB011140">
    <property type="protein sequence ID" value="BAA25494.1"/>
    <property type="molecule type" value="mRNA"/>
</dbReference>
<dbReference type="CCDS" id="CCDS10526.1"/>
<dbReference type="PIR" id="T00337">
    <property type="entry name" value="T00337"/>
</dbReference>
<dbReference type="RefSeq" id="NP_002696.3">
    <property type="nucleotide sequence ID" value="NM_002705.4"/>
</dbReference>
<dbReference type="PDB" id="4Q28">
    <property type="method" value="X-ray"/>
    <property type="resolution" value="2.64 A"/>
    <property type="chains" value="A/B/C/D=1655-1756"/>
</dbReference>
<dbReference type="PDBsum" id="4Q28"/>
<dbReference type="SMR" id="O60437"/>
<dbReference type="BioGRID" id="111488">
    <property type="interactions" value="208"/>
</dbReference>
<dbReference type="FunCoup" id="O60437">
    <property type="interactions" value="626"/>
</dbReference>
<dbReference type="IntAct" id="O60437">
    <property type="interactions" value="127"/>
</dbReference>
<dbReference type="MINT" id="O60437"/>
<dbReference type="STRING" id="9606.ENSP00000340510"/>
<dbReference type="GlyGen" id="O60437">
    <property type="glycosylation" value="2 sites, 1 O-linked glycan (1 site)"/>
</dbReference>
<dbReference type="iPTMnet" id="O60437"/>
<dbReference type="PhosphoSitePlus" id="O60437"/>
<dbReference type="SwissPalm" id="O60437"/>
<dbReference type="BioMuta" id="PPL"/>
<dbReference type="jPOST" id="O60437"/>
<dbReference type="MassIVE" id="O60437"/>
<dbReference type="PaxDb" id="9606-ENSP00000340510"/>
<dbReference type="PeptideAtlas" id="O60437"/>
<dbReference type="PRIDE" id="O60437"/>
<dbReference type="ProteomicsDB" id="49402"/>
<dbReference type="Pumba" id="O60437"/>
<dbReference type="Antibodypedia" id="24458">
    <property type="antibodies" value="188 antibodies from 25 providers"/>
</dbReference>
<dbReference type="DNASU" id="5493"/>
<dbReference type="Ensembl" id="ENST00000345988.7">
    <property type="protein sequence ID" value="ENSP00000340510.2"/>
    <property type="gene ID" value="ENSG00000118898.16"/>
</dbReference>
<dbReference type="GeneID" id="5493"/>
<dbReference type="KEGG" id="hsa:5493"/>
<dbReference type="MANE-Select" id="ENST00000345988.7">
    <property type="protein sequence ID" value="ENSP00000340510.2"/>
    <property type="RefSeq nucleotide sequence ID" value="NM_002705.5"/>
    <property type="RefSeq protein sequence ID" value="NP_002696.4"/>
</dbReference>
<dbReference type="UCSC" id="uc002cyd.1">
    <property type="organism name" value="human"/>
</dbReference>
<dbReference type="AGR" id="HGNC:9273"/>
<dbReference type="CTD" id="5493"/>
<dbReference type="DisGeNET" id="5493"/>
<dbReference type="GeneCards" id="PPL"/>
<dbReference type="HGNC" id="HGNC:9273">
    <property type="gene designation" value="PPL"/>
</dbReference>
<dbReference type="HPA" id="ENSG00000118898">
    <property type="expression patterns" value="Tissue enhanced (esophagus, vagina)"/>
</dbReference>
<dbReference type="MIM" id="602871">
    <property type="type" value="gene"/>
</dbReference>
<dbReference type="neXtProt" id="NX_O60437"/>
<dbReference type="OpenTargets" id="ENSG00000118898"/>
<dbReference type="PharmGKB" id="PA33602"/>
<dbReference type="VEuPathDB" id="HostDB:ENSG00000118898"/>
<dbReference type="eggNOG" id="KOG0516">
    <property type="taxonomic scope" value="Eukaryota"/>
</dbReference>
<dbReference type="GeneTree" id="ENSGT00940000153578"/>
<dbReference type="InParanoid" id="O60437"/>
<dbReference type="OMA" id="YRSVKQK"/>
<dbReference type="OrthoDB" id="29745at2759"/>
<dbReference type="PAN-GO" id="O60437">
    <property type="GO annotations" value="6 GO annotations based on evolutionary models"/>
</dbReference>
<dbReference type="PhylomeDB" id="O60437"/>
<dbReference type="TreeFam" id="TF342779"/>
<dbReference type="PathwayCommons" id="O60437"/>
<dbReference type="Reactome" id="R-HSA-6809371">
    <property type="pathway name" value="Formation of the cornified envelope"/>
</dbReference>
<dbReference type="Reactome" id="R-HSA-8851680">
    <property type="pathway name" value="Butyrophilin (BTN) family interactions"/>
</dbReference>
<dbReference type="SignaLink" id="O60437"/>
<dbReference type="BioGRID-ORCS" id="5493">
    <property type="hits" value="25 hits in 1154 CRISPR screens"/>
</dbReference>
<dbReference type="ChiTaRS" id="PPL">
    <property type="organism name" value="human"/>
</dbReference>
<dbReference type="EvolutionaryTrace" id="O60437"/>
<dbReference type="GeneWiki" id="Periplakin"/>
<dbReference type="GenomeRNAi" id="5493"/>
<dbReference type="Pharos" id="O60437">
    <property type="development level" value="Tbio"/>
</dbReference>
<dbReference type="PRO" id="PR:O60437"/>
<dbReference type="Proteomes" id="UP000005640">
    <property type="component" value="Chromosome 16"/>
</dbReference>
<dbReference type="RNAct" id="O60437">
    <property type="molecule type" value="protein"/>
</dbReference>
<dbReference type="Bgee" id="ENSG00000118898">
    <property type="expression patterns" value="Expressed in oral cavity and 184 other cell types or tissues"/>
</dbReference>
<dbReference type="ExpressionAtlas" id="O60437">
    <property type="expression patterns" value="baseline and differential"/>
</dbReference>
<dbReference type="GO" id="GO:0001533">
    <property type="term" value="C:cornified envelope"/>
    <property type="evidence" value="ECO:0000304"/>
    <property type="project" value="Reactome"/>
</dbReference>
<dbReference type="GO" id="GO:0005737">
    <property type="term" value="C:cytoplasm"/>
    <property type="evidence" value="ECO:0000250"/>
    <property type="project" value="UniProtKB"/>
</dbReference>
<dbReference type="GO" id="GO:0005856">
    <property type="term" value="C:cytoskeleton"/>
    <property type="evidence" value="ECO:0000304"/>
    <property type="project" value="ProtInc"/>
</dbReference>
<dbReference type="GO" id="GO:0005829">
    <property type="term" value="C:cytosol"/>
    <property type="evidence" value="ECO:0000304"/>
    <property type="project" value="Reactome"/>
</dbReference>
<dbReference type="GO" id="GO:0030057">
    <property type="term" value="C:desmosome"/>
    <property type="evidence" value="ECO:0007669"/>
    <property type="project" value="UniProtKB-SubCell"/>
</dbReference>
<dbReference type="GO" id="GO:0070062">
    <property type="term" value="C:extracellular exosome"/>
    <property type="evidence" value="ECO:0007005"/>
    <property type="project" value="UniProtKB"/>
</dbReference>
<dbReference type="GO" id="GO:0016020">
    <property type="term" value="C:membrane"/>
    <property type="evidence" value="ECO:0000318"/>
    <property type="project" value="GO_Central"/>
</dbReference>
<dbReference type="GO" id="GO:0005886">
    <property type="term" value="C:plasma membrane"/>
    <property type="evidence" value="ECO:0000250"/>
    <property type="project" value="UniProtKB"/>
</dbReference>
<dbReference type="GO" id="GO:0045296">
    <property type="term" value="F:cadherin binding"/>
    <property type="evidence" value="ECO:0007005"/>
    <property type="project" value="BHF-UCL"/>
</dbReference>
<dbReference type="GO" id="GO:0005200">
    <property type="term" value="F:structural constituent of cytoskeleton"/>
    <property type="evidence" value="ECO:0000304"/>
    <property type="project" value="ProtInc"/>
</dbReference>
<dbReference type="GO" id="GO:0005198">
    <property type="term" value="F:structural molecule activity"/>
    <property type="evidence" value="ECO:0000318"/>
    <property type="project" value="GO_Central"/>
</dbReference>
<dbReference type="GO" id="GO:0045104">
    <property type="term" value="P:intermediate filament cytoskeleton organization"/>
    <property type="evidence" value="ECO:0000318"/>
    <property type="project" value="GO_Central"/>
</dbReference>
<dbReference type="GO" id="GO:0031424">
    <property type="term" value="P:keratinization"/>
    <property type="evidence" value="ECO:0007669"/>
    <property type="project" value="UniProtKB-KW"/>
</dbReference>
<dbReference type="GO" id="GO:0009612">
    <property type="term" value="P:response to mechanical stimulus"/>
    <property type="evidence" value="ECO:0000270"/>
    <property type="project" value="BHF-UCL"/>
</dbReference>
<dbReference type="GO" id="GO:0042060">
    <property type="term" value="P:wound healing"/>
    <property type="evidence" value="ECO:0000318"/>
    <property type="project" value="GO_Central"/>
</dbReference>
<dbReference type="FunFam" id="1.20.58.60:FF:000109">
    <property type="entry name" value="Periplakin"/>
    <property type="match status" value="1"/>
</dbReference>
<dbReference type="FunFam" id="1.20.58.60:FF:000143">
    <property type="entry name" value="Periplakin"/>
    <property type="match status" value="1"/>
</dbReference>
<dbReference type="FunFam" id="1.20.58.60:FF:000160">
    <property type="entry name" value="Periplakin"/>
    <property type="match status" value="1"/>
</dbReference>
<dbReference type="FunFam" id="2.30.30.40:FF:000088">
    <property type="entry name" value="Periplakin"/>
    <property type="match status" value="1"/>
</dbReference>
<dbReference type="FunFam" id="3.30.160.780:FF:000001">
    <property type="entry name" value="Plectin a"/>
    <property type="match status" value="1"/>
</dbReference>
<dbReference type="FunFam" id="1.20.58.60:FF:000030">
    <property type="entry name" value="Short stop, isoform K"/>
    <property type="match status" value="1"/>
</dbReference>
<dbReference type="Gene3D" id="1.20.58.60">
    <property type="match status" value="4"/>
</dbReference>
<dbReference type="Gene3D" id="3.30.160.780">
    <property type="match status" value="1"/>
</dbReference>
<dbReference type="Gene3D" id="2.30.30.40">
    <property type="entry name" value="SH3 Domains"/>
    <property type="match status" value="1"/>
</dbReference>
<dbReference type="InterPro" id="IPR041615">
    <property type="entry name" value="Desmoplakin_SH3"/>
</dbReference>
<dbReference type="InterPro" id="IPR043197">
    <property type="entry name" value="Plakin"/>
</dbReference>
<dbReference type="InterPro" id="IPR035915">
    <property type="entry name" value="Plakin_repeat_sf"/>
</dbReference>
<dbReference type="InterPro" id="IPR001101">
    <property type="entry name" value="Plectin_repeat"/>
</dbReference>
<dbReference type="InterPro" id="IPR001452">
    <property type="entry name" value="SH3_domain"/>
</dbReference>
<dbReference type="InterPro" id="IPR018159">
    <property type="entry name" value="Spectrin/alpha-actinin"/>
</dbReference>
<dbReference type="InterPro" id="IPR055419">
    <property type="entry name" value="Spectrin_PEPL/EVPL"/>
</dbReference>
<dbReference type="PANTHER" id="PTHR23169">
    <property type="entry name" value="ENVOPLAKIN"/>
    <property type="match status" value="1"/>
</dbReference>
<dbReference type="PANTHER" id="PTHR23169:SF7">
    <property type="entry name" value="ENVOPLAKIN"/>
    <property type="match status" value="1"/>
</dbReference>
<dbReference type="Pfam" id="PF17902">
    <property type="entry name" value="SH3_10"/>
    <property type="match status" value="1"/>
</dbReference>
<dbReference type="Pfam" id="PF23160">
    <property type="entry name" value="Spectrin_1st_PEPL"/>
    <property type="match status" value="1"/>
</dbReference>
<dbReference type="SMART" id="SM00250">
    <property type="entry name" value="PLEC"/>
    <property type="match status" value="2"/>
</dbReference>
<dbReference type="SMART" id="SM00150">
    <property type="entry name" value="SPEC"/>
    <property type="match status" value="5"/>
</dbReference>
<dbReference type="SUPFAM" id="SSF75399">
    <property type="entry name" value="Plakin repeat"/>
    <property type="match status" value="1"/>
</dbReference>
<dbReference type="SUPFAM" id="SSF46966">
    <property type="entry name" value="Spectrin repeat"/>
    <property type="match status" value="2"/>
</dbReference>
<dbReference type="PROSITE" id="PS50002">
    <property type="entry name" value="SH3"/>
    <property type="match status" value="1"/>
</dbReference>
<comment type="function">
    <text evidence="9">Component of the cornified envelope of keratinocytes. May link the cornified envelope to desmosomes and intermediate filaments. May act as a localization signal in PKB/AKT-mediated signaling.</text>
</comment>
<comment type="subunit">
    <text evidence="1 5 6 7 9">Homodimer or a heterodimer with EVPL (PubMed:9412476). Found in a complex composed of PPL (via C-terminal linker domain), BFSP1 and BFSP2 in the retinal lens (By similarity). Within the complex interacts (via C-terminal linker domain) with BFSP2 (By similarity). Interacts with VIM (By similarity). Binds to the PH domain of AKT1 (PubMed:12244133). Interacts with FCGR1A (PubMed:15229321). May interact with PPHLN1 (PubMed:12853457).</text>
</comment>
<comment type="interaction">
    <interactant intactId="EBI-368321">
        <id>O60437</id>
    </interactant>
    <interactant intactId="EBI-769418">
        <id>Q9H9F9</id>
        <label>ACTR5</label>
    </interactant>
    <organismsDiffer>false</organismsDiffer>
    <experiments>3</experiments>
</comment>
<comment type="interaction">
    <interactant intactId="EBI-368321">
        <id>O60437</id>
    </interactant>
    <interactant intactId="EBI-2371423">
        <id>O43865</id>
        <label>AHCYL1</label>
    </interactant>
    <organismsDiffer>false</organismsDiffer>
    <experiments>3</experiments>
</comment>
<comment type="interaction">
    <interactant intactId="EBI-368321">
        <id>O60437</id>
    </interactant>
    <interactant intactId="EBI-296087">
        <id>P31749</id>
        <label>AKT1</label>
    </interactant>
    <organismsDiffer>false</organismsDiffer>
    <experiments>2</experiments>
</comment>
<comment type="interaction">
    <interactant intactId="EBI-368321">
        <id>O60437</id>
    </interactant>
    <interactant intactId="EBI-3905054">
        <id>P13196</id>
        <label>ALAS1</label>
    </interactant>
    <organismsDiffer>false</organismsDiffer>
    <experiments>6</experiments>
</comment>
<comment type="interaction">
    <interactant intactId="EBI-368321">
        <id>O60437</id>
    </interactant>
    <interactant intactId="EBI-720960">
        <id>O76027</id>
        <label>ANXA9</label>
    </interactant>
    <organismsDiffer>false</organismsDiffer>
    <experiments>7</experiments>
</comment>
<comment type="interaction">
    <interactant intactId="EBI-368321">
        <id>O60437</id>
    </interactant>
    <interactant intactId="EBI-2809309">
        <id>O00481</id>
        <label>BTN3A1</label>
    </interactant>
    <organismsDiffer>false</organismsDiffer>
    <experiments>6</experiments>
</comment>
<comment type="interaction">
    <interactant intactId="EBI-368321">
        <id>O60437</id>
    </interactant>
    <interactant intactId="EBI-14033666">
        <id>O00481-2</id>
        <label>BTN3A1</label>
    </interactant>
    <organismsDiffer>false</organismsDiffer>
    <experiments>5</experiments>
</comment>
<comment type="interaction">
    <interactant intactId="EBI-368321">
        <id>O60437</id>
    </interactant>
    <interactant intactId="EBI-10697767">
        <id>Q5SZD1</id>
        <label>C6orf141</label>
    </interactant>
    <organismsDiffer>false</organismsDiffer>
    <experiments>3</experiments>
</comment>
<comment type="interaction">
    <interactant intactId="EBI-368321">
        <id>O60437</id>
    </interactant>
    <interactant intactId="EBI-10181988">
        <id>Q8IYX8-2</id>
        <label>CEP57L1</label>
    </interactant>
    <organismsDiffer>false</organismsDiffer>
    <experiments>3</experiments>
</comment>
<comment type="interaction">
    <interactant intactId="EBI-368321">
        <id>O60437</id>
    </interactant>
    <interactant intactId="EBI-1055572">
        <id>P17661</id>
        <label>DES</label>
    </interactant>
    <organismsDiffer>false</organismsDiffer>
    <experiments>3</experiments>
</comment>
<comment type="interaction">
    <interactant intactId="EBI-368321">
        <id>O60437</id>
    </interactant>
    <interactant intactId="EBI-2691157">
        <id>Q5T447</id>
        <label>HECTD3</label>
    </interactant>
    <organismsDiffer>false</organismsDiffer>
    <experiments>3</experiments>
</comment>
<comment type="interaction">
    <interactant intactId="EBI-368321">
        <id>O60437</id>
    </interactant>
    <interactant intactId="EBI-466029">
        <id>P42858</id>
        <label>HTT</label>
    </interactant>
    <organismsDiffer>false</organismsDiffer>
    <experiments>8</experiments>
</comment>
<comment type="interaction">
    <interactant intactId="EBI-368321">
        <id>O60437</id>
    </interactant>
    <interactant intactId="EBI-11522367">
        <id>Q13422-7</id>
        <label>IKZF1</label>
    </interactant>
    <organismsDiffer>false</organismsDiffer>
    <experiments>3</experiments>
</comment>
<comment type="interaction">
    <interactant intactId="EBI-368321">
        <id>O60437</id>
    </interactant>
    <interactant intactId="EBI-11976683">
        <id>Q4G0X4</id>
        <label>KCTD21</label>
    </interactant>
    <organismsDiffer>false</organismsDiffer>
    <experiments>3</experiments>
</comment>
<comment type="interaction">
    <interactant intactId="EBI-368321">
        <id>O60437</id>
    </interactant>
    <interactant intactId="EBI-373334">
        <id>Q9Y448</id>
        <label>KNSTRN</label>
    </interactant>
    <organismsDiffer>false</organismsDiffer>
    <experiments>3</experiments>
</comment>
<comment type="interaction">
    <interactant intactId="EBI-368321">
        <id>O60437</id>
    </interactant>
    <interactant intactId="EBI-11980019">
        <id>Q7Z3Z0</id>
        <label>KRT25</label>
    </interactant>
    <organismsDiffer>false</organismsDiffer>
    <experiments>3</experiments>
</comment>
<comment type="interaction">
    <interactant intactId="EBI-368321">
        <id>O60437</id>
    </interactant>
    <interactant intactId="EBI-11958242">
        <id>Q6A163</id>
        <label>KRT39</label>
    </interactant>
    <organismsDiffer>false</organismsDiffer>
    <experiments>4</experiments>
</comment>
<comment type="interaction">
    <interactant intactId="EBI-368321">
        <id>O60437</id>
    </interactant>
    <interactant intactId="EBI-723426">
        <id>Q13084</id>
        <label>MRPL28</label>
    </interactant>
    <organismsDiffer>false</organismsDiffer>
    <experiments>3</experiments>
</comment>
<comment type="interaction">
    <interactant intactId="EBI-368321">
        <id>O60437</id>
    </interactant>
    <interactant intactId="EBI-10302990">
        <id>Q9BYU1</id>
        <label>PBX4</label>
    </interactant>
    <organismsDiffer>false</organismsDiffer>
    <experiments>3</experiments>
</comment>
<comment type="interaction">
    <interactant intactId="EBI-368321">
        <id>O60437</id>
    </interactant>
    <interactant intactId="EBI-79165">
        <id>Q9NRD5</id>
        <label>PICK1</label>
    </interactant>
    <organismsDiffer>false</organismsDiffer>
    <experiments>3</experiments>
</comment>
<comment type="interaction">
    <interactant intactId="EBI-368321">
        <id>O60437</id>
    </interactant>
    <interactant intactId="EBI-12069346">
        <id>Q6IQ23-2</id>
        <label>PLEKHA7</label>
    </interactant>
    <organismsDiffer>false</organismsDiffer>
    <experiments>3</experiments>
</comment>
<comment type="interaction">
    <interactant intactId="EBI-368321">
        <id>O60437</id>
    </interactant>
    <interactant intactId="EBI-11986735">
        <id>Q8WVV4-1</id>
        <label>POF1B</label>
    </interactant>
    <organismsDiffer>false</organismsDiffer>
    <experiments>3</experiments>
</comment>
<comment type="interaction">
    <interactant intactId="EBI-368321">
        <id>O60437</id>
    </interactant>
    <interactant intactId="EBI-747844">
        <id>Q96QF0</id>
        <label>RAB3IP</label>
    </interactant>
    <organismsDiffer>false</organismsDiffer>
    <experiments>3</experiments>
</comment>
<comment type="interaction">
    <interactant intactId="EBI-368321">
        <id>O60437</id>
    </interactant>
    <interactant intactId="EBI-11984839">
        <id>Q96QF0-7</id>
        <label>RAB3IP</label>
    </interactant>
    <organismsDiffer>false</organismsDiffer>
    <experiments>3</experiments>
</comment>
<comment type="interaction">
    <interactant intactId="EBI-368321">
        <id>O60437</id>
    </interactant>
    <interactant intactId="EBI-749285">
        <id>Q15311</id>
        <label>RALBP1</label>
    </interactant>
    <organismsDiffer>false</organismsDiffer>
    <experiments>5</experiments>
</comment>
<comment type="interaction">
    <interactant intactId="EBI-368321">
        <id>O60437</id>
    </interactant>
    <interactant intactId="EBI-355744">
        <id>Q12933</id>
        <label>TRAF2</label>
    </interactant>
    <organismsDiffer>false</organismsDiffer>
    <experiments>6</experiments>
</comment>
<comment type="interaction">
    <interactant intactId="EBI-368321">
        <id>O60437</id>
    </interactant>
    <interactant intactId="EBI-719493">
        <id>P14373</id>
        <label>TRIM27</label>
    </interactant>
    <organismsDiffer>false</organismsDiffer>
    <experiments>3</experiments>
</comment>
<comment type="interaction">
    <interactant intactId="EBI-368321">
        <id>O60437</id>
    </interactant>
    <interactant intactId="EBI-739485">
        <id>Q9Y3Q8</id>
        <label>TSC22D4</label>
    </interactant>
    <organismsDiffer>false</organismsDiffer>
    <experiments>3</experiments>
</comment>
<comment type="interaction">
    <interactant intactId="EBI-368321">
        <id>O60437</id>
    </interactant>
    <interactant intactId="EBI-742943">
        <id>Q96BW1</id>
        <label>UPRT</label>
    </interactant>
    <organismsDiffer>false</organismsDiffer>
    <experiments>3</experiments>
</comment>
<comment type="interaction">
    <interactant intactId="EBI-368321">
        <id>O60437</id>
    </interactant>
    <interactant intactId="EBI-353844">
        <id>P08670</id>
        <label>VIM</label>
    </interactant>
    <organismsDiffer>false</organismsDiffer>
    <experiments>3</experiments>
</comment>
<comment type="interaction">
    <interactant intactId="EBI-368321">
        <id>O60437</id>
    </interactant>
    <interactant intactId="EBI-3918996">
        <id>Q9HCK0</id>
        <label>ZBTB26</label>
    </interactant>
    <organismsDiffer>false</organismsDiffer>
    <experiments>3</experiments>
</comment>
<comment type="interaction">
    <interactant intactId="EBI-368321">
        <id>O60437</id>
    </interactant>
    <interactant intactId="EBI-741694">
        <id>P49910</id>
        <label>ZNF165</label>
    </interactant>
    <organismsDiffer>false</organismsDiffer>
    <experiments>3</experiments>
</comment>
<comment type="interaction">
    <interactant intactId="EBI-368321">
        <id>O60437</id>
    </interactant>
    <interactant intactId="EBI-12838388">
        <id>O14771</id>
        <label>ZNF213</label>
    </interactant>
    <organismsDiffer>false</organismsDiffer>
    <experiments>3</experiments>
</comment>
<comment type="interaction">
    <interactant intactId="EBI-368321">
        <id>O60437</id>
    </interactant>
    <interactant intactId="EBI-744493">
        <id>O14978</id>
        <label>ZNF263</label>
    </interactant>
    <organismsDiffer>false</organismsDiffer>
    <experiments>3</experiments>
</comment>
<comment type="interaction">
    <interactant intactId="EBI-368321">
        <id>O60437</id>
    </interactant>
    <interactant intactId="EBI-17269964">
        <id>Q6S9Z5</id>
        <label>ZNF474</label>
    </interactant>
    <organismsDiffer>false</organismsDiffer>
    <experiments>3</experiments>
</comment>
<comment type="interaction">
    <interactant intactId="EBI-368321">
        <id>O60437</id>
    </interactant>
    <interactant intactId="EBI-5292994">
        <id>Q8NBB4</id>
        <label>ZSCAN1</label>
    </interactant>
    <organismsDiffer>false</organismsDiffer>
    <experiments>3</experiments>
</comment>
<comment type="interaction">
    <interactant intactId="EBI-368321">
        <id>O60437</id>
    </interactant>
    <interactant intactId="EBI-12021938">
        <id>Q8NBB4-2</id>
        <label>ZSCAN1</label>
    </interactant>
    <organismsDiffer>false</organismsDiffer>
    <experiments>3</experiments>
</comment>
<comment type="interaction">
    <interactant intactId="EBI-368321">
        <id>O60437</id>
    </interactant>
    <interactant intactId="EBI-723596">
        <id>Q9H4T2</id>
        <label>ZSCAN16</label>
    </interactant>
    <organismsDiffer>false</organismsDiffer>
    <experiments>3</experiments>
</comment>
<comment type="subcellular location">
    <subcellularLocation>
        <location evidence="9">Cell junction</location>
        <location evidence="9">Desmosome</location>
    </subcellularLocation>
    <subcellularLocation>
        <location evidence="9">Cytoplasm</location>
        <location evidence="9">Cytoskeleton</location>
    </subcellularLocation>
    <subcellularLocation>
        <location evidence="1">Cell membrane</location>
    </subcellularLocation>
    <subcellularLocation>
        <location evidence="1">Cytoplasm</location>
    </subcellularLocation>
</comment>
<comment type="tissue specificity">
    <text evidence="9 10">Expressed in stratified squamous epithelia and in some other epithelia.</text>
</comment>
<comment type="developmental stage">
    <text evidence="6">Expressed in the epidermis, nuclei of dermal fibroblasts, cell periphery of flattened keratinocytes, and dermal and epithelial cells lining the excretory ducts of the sweat glands in neonatal foreskin.</text>
</comment>
<comment type="induction">
    <text evidence="9">During differentiation of epidermal keratinocytes.</text>
</comment>
<comment type="similarity">
    <text evidence="13">Belongs to the plakin or cytolinker family.</text>
</comment>
<reference key="1">
    <citation type="journal article" date="1997" name="J. Cell Biol.">
        <title>Periplakin, a novel component of cornified envelopes and desmosomes that belongs to the plakin family and forms complexes with envoplakin.</title>
        <authorList>
            <person name="Ruhrberg C."/>
            <person name="Hajibagheri M.A.N."/>
            <person name="Parry D.A.D."/>
            <person name="Watt F.M."/>
        </authorList>
    </citation>
    <scope>NUCLEOTIDE SEQUENCE [MRNA]</scope>
    <scope>FUNCTION</scope>
    <scope>TISSUE SPECIFICITY</scope>
    <scope>SUBCELLULAR LOCATION</scope>
    <scope>INDUCTION</scope>
    <scope>INTERACTION WITH EVPL</scope>
    <scope>VARIANTS GLN-589 AND SER-819</scope>
    <source>
        <tissue>Keratinocyte</tissue>
    </source>
</reference>
<reference key="2">
    <citation type="journal article" date="1998" name="Genomics">
        <title>cDNA cloning, mRNA expression, and chromosomal mapping of human and mouse periplakin genes.</title>
        <authorList>
            <person name="Aho S."/>
            <person name="McLean W.H.I."/>
            <person name="Li K."/>
            <person name="Uitto J."/>
        </authorList>
    </citation>
    <scope>NUCLEOTIDE SEQUENCE [MRNA]</scope>
    <scope>TISSUE SPECIFICITY</scope>
    <scope>VARIANT SER-819</scope>
    <source>
        <tissue>Keratinocyte</tissue>
    </source>
</reference>
<reference key="3">
    <citation type="journal article" date="1999" name="Genomics">
        <title>Human periplakin: genomic organization in a clonally unstable region of chromosome 16p with an abundance of repetitive sequence elements.</title>
        <authorList>
            <person name="Aho S."/>
            <person name="Rothenberger K."/>
            <person name="Tan E.M.L."/>
            <person name="Ryoo Y.W."/>
            <person name="Cho B.H."/>
            <person name="McLean W.H.I."/>
            <person name="Uitto J."/>
        </authorList>
    </citation>
    <scope>NUCLEOTIDE SEQUENCE [GENOMIC DNA]</scope>
    <scope>VARIANT SER-819</scope>
</reference>
<reference key="4">
    <citation type="journal article" date="2004" name="Nature">
        <title>The sequence and analysis of duplication-rich human chromosome 16.</title>
        <authorList>
            <person name="Martin J."/>
            <person name="Han C."/>
            <person name="Gordon L.A."/>
            <person name="Terry A."/>
            <person name="Prabhakar S."/>
            <person name="She X."/>
            <person name="Xie G."/>
            <person name="Hellsten U."/>
            <person name="Chan Y.M."/>
            <person name="Altherr M."/>
            <person name="Couronne O."/>
            <person name="Aerts A."/>
            <person name="Bajorek E."/>
            <person name="Black S."/>
            <person name="Blumer H."/>
            <person name="Branscomb E."/>
            <person name="Brown N.C."/>
            <person name="Bruno W.J."/>
            <person name="Buckingham J.M."/>
            <person name="Callen D.F."/>
            <person name="Campbell C.S."/>
            <person name="Campbell M.L."/>
            <person name="Campbell E.W."/>
            <person name="Caoile C."/>
            <person name="Challacombe J.F."/>
            <person name="Chasteen L.A."/>
            <person name="Chertkov O."/>
            <person name="Chi H.C."/>
            <person name="Christensen M."/>
            <person name="Clark L.M."/>
            <person name="Cohn J.D."/>
            <person name="Denys M."/>
            <person name="Detter J.C."/>
            <person name="Dickson M."/>
            <person name="Dimitrijevic-Bussod M."/>
            <person name="Escobar J."/>
            <person name="Fawcett J.J."/>
            <person name="Flowers D."/>
            <person name="Fotopulos D."/>
            <person name="Glavina T."/>
            <person name="Gomez M."/>
            <person name="Gonzales E."/>
            <person name="Goodstein D."/>
            <person name="Goodwin L.A."/>
            <person name="Grady D.L."/>
            <person name="Grigoriev I."/>
            <person name="Groza M."/>
            <person name="Hammon N."/>
            <person name="Hawkins T."/>
            <person name="Haydu L."/>
            <person name="Hildebrand C.E."/>
            <person name="Huang W."/>
            <person name="Israni S."/>
            <person name="Jett J."/>
            <person name="Jewett P.B."/>
            <person name="Kadner K."/>
            <person name="Kimball H."/>
            <person name="Kobayashi A."/>
            <person name="Krawczyk M.-C."/>
            <person name="Leyba T."/>
            <person name="Longmire J.L."/>
            <person name="Lopez F."/>
            <person name="Lou Y."/>
            <person name="Lowry S."/>
            <person name="Ludeman T."/>
            <person name="Manohar C.F."/>
            <person name="Mark G.A."/>
            <person name="McMurray K.L."/>
            <person name="Meincke L.J."/>
            <person name="Morgan J."/>
            <person name="Moyzis R.K."/>
            <person name="Mundt M.O."/>
            <person name="Munk A.C."/>
            <person name="Nandkeshwar R.D."/>
            <person name="Pitluck S."/>
            <person name="Pollard M."/>
            <person name="Predki P."/>
            <person name="Parson-Quintana B."/>
            <person name="Ramirez L."/>
            <person name="Rash S."/>
            <person name="Retterer J."/>
            <person name="Ricke D.O."/>
            <person name="Robinson D.L."/>
            <person name="Rodriguez A."/>
            <person name="Salamov A."/>
            <person name="Saunders E.H."/>
            <person name="Scott D."/>
            <person name="Shough T."/>
            <person name="Stallings R.L."/>
            <person name="Stalvey M."/>
            <person name="Sutherland R.D."/>
            <person name="Tapia R."/>
            <person name="Tesmer J.G."/>
            <person name="Thayer N."/>
            <person name="Thompson L.S."/>
            <person name="Tice H."/>
            <person name="Torney D.C."/>
            <person name="Tran-Gyamfi M."/>
            <person name="Tsai M."/>
            <person name="Ulanovsky L.E."/>
            <person name="Ustaszewska A."/>
            <person name="Vo N."/>
            <person name="White P.S."/>
            <person name="Williams A.L."/>
            <person name="Wills P.L."/>
            <person name="Wu J.-R."/>
            <person name="Wu K."/>
            <person name="Yang J."/>
            <person name="DeJong P."/>
            <person name="Bruce D."/>
            <person name="Doggett N.A."/>
            <person name="Deaven L."/>
            <person name="Schmutz J."/>
            <person name="Grimwood J."/>
            <person name="Richardson P."/>
            <person name="Rokhsar D.S."/>
            <person name="Eichler E.E."/>
            <person name="Gilna P."/>
            <person name="Lucas S.M."/>
            <person name="Myers R.M."/>
            <person name="Rubin E.M."/>
            <person name="Pennacchio L.A."/>
        </authorList>
    </citation>
    <scope>NUCLEOTIDE SEQUENCE [LARGE SCALE GENOMIC DNA]</scope>
</reference>
<reference key="5">
    <citation type="submission" date="2005-09" db="EMBL/GenBank/DDBJ databases">
        <authorList>
            <person name="Mural R.J."/>
            <person name="Istrail S."/>
            <person name="Sutton G.G."/>
            <person name="Florea L."/>
            <person name="Halpern A.L."/>
            <person name="Mobarry C.M."/>
            <person name="Lippert R."/>
            <person name="Walenz B."/>
            <person name="Shatkay H."/>
            <person name="Dew I."/>
            <person name="Miller J.R."/>
            <person name="Flanigan M.J."/>
            <person name="Edwards N.J."/>
            <person name="Bolanos R."/>
            <person name="Fasulo D."/>
            <person name="Halldorsson B.V."/>
            <person name="Hannenhalli S."/>
            <person name="Turner R."/>
            <person name="Yooseph S."/>
            <person name="Lu F."/>
            <person name="Nusskern D.R."/>
            <person name="Shue B.C."/>
            <person name="Zheng X.H."/>
            <person name="Zhong F."/>
            <person name="Delcher A.L."/>
            <person name="Huson D.H."/>
            <person name="Kravitz S.A."/>
            <person name="Mouchard L."/>
            <person name="Reinert K."/>
            <person name="Remington K.A."/>
            <person name="Clark A.G."/>
            <person name="Waterman M.S."/>
            <person name="Eichler E.E."/>
            <person name="Adams M.D."/>
            <person name="Hunkapiller M.W."/>
            <person name="Myers E.W."/>
            <person name="Venter J.C."/>
        </authorList>
    </citation>
    <scope>NUCLEOTIDE SEQUENCE [LARGE SCALE GENOMIC DNA]</scope>
    <scope>VARIANTS GLN-589; SER-819 AND GLU-1573</scope>
</reference>
<reference key="6">
    <citation type="journal article" date="2004" name="Genome Res.">
        <title>The status, quality, and expansion of the NIH full-length cDNA project: the Mammalian Gene Collection (MGC).</title>
        <authorList>
            <consortium name="The MGC Project Team"/>
        </authorList>
    </citation>
    <scope>NUCLEOTIDE SEQUENCE [LARGE SCALE MRNA]</scope>
    <scope>VARIANTS GLN-589; SER-819 AND GLU-1573</scope>
</reference>
<reference key="7">
    <citation type="journal article" date="1998" name="DNA Res.">
        <title>Prediction of the coding sequences of unidentified human genes. IX. The complete sequences of 100 new cDNA clones from brain which can code for large proteins in vitro.</title>
        <authorList>
            <person name="Nagase T."/>
            <person name="Ishikawa K."/>
            <person name="Miyajima N."/>
            <person name="Tanaka A."/>
            <person name="Kotani H."/>
            <person name="Nomura N."/>
            <person name="Ohara O."/>
        </authorList>
    </citation>
    <scope>NUCLEOTIDE SEQUENCE [LARGE SCALE MRNA] OF 331-1756</scope>
    <scope>VARIANTS GLN-589; SER-819 AND GLU-1573</scope>
    <source>
        <tissue>Brain</tissue>
    </source>
</reference>
<reference key="8">
    <citation type="journal article" date="2002" name="J. Cell Sci.">
        <title>Binding of protein kinase B to the plakin family member periplakin.</title>
        <authorList>
            <person name="van den Heuvel A.P."/>
            <person name="de Vries-Smits A.M.M."/>
            <person name="van Weeren P.C."/>
            <person name="Dijkers P.F."/>
            <person name="de Bruyn K.M."/>
            <person name="Riedl J.A."/>
            <person name="Burgering B.M.T."/>
        </authorList>
    </citation>
    <scope>INTERACTION WITH AKT1</scope>
    <source>
        <tissue>Embryo</tissue>
    </source>
</reference>
<reference key="9">
    <citation type="journal article" date="2003" name="J. Biol. Chem.">
        <title>Characterization of periphilin, a widespread, highly insoluble nuclear protein and potential constituent of the keratinocyte cornified envelope.</title>
        <authorList>
            <person name="Kazerounian S."/>
            <person name="Aho S."/>
        </authorList>
    </citation>
    <scope>INTERACTION WITH PPHLN1</scope>
    <scope>DEVELOPMENTAL STAGE</scope>
</reference>
<reference key="10">
    <citation type="journal article" date="2004" name="Proc. Natl. Acad. Sci. U.S.A.">
        <title>Direct interaction between FcgammaRI (CD64) and periplakin controls receptor endocytosis and ligand binding capacity.</title>
        <authorList>
            <person name="Beekman J.M."/>
            <person name="Bakema J.E."/>
            <person name="van de Winkel J.G.J."/>
            <person name="Leusen J.H.W."/>
        </authorList>
    </citation>
    <scope>INTERACTION WITH FCGR1A</scope>
</reference>
<reference key="11">
    <citation type="journal article" date="2011" name="BMC Syst. Biol.">
        <title>Initial characterization of the human central proteome.</title>
        <authorList>
            <person name="Burkard T.R."/>
            <person name="Planyavsky M."/>
            <person name="Kaupe I."/>
            <person name="Breitwieser F.P."/>
            <person name="Buerckstuemmer T."/>
            <person name="Bennett K.L."/>
            <person name="Superti-Furga G."/>
            <person name="Colinge J."/>
        </authorList>
    </citation>
    <scope>IDENTIFICATION BY MASS SPECTROMETRY [LARGE SCALE ANALYSIS]</scope>
</reference>
<reference key="12">
    <citation type="journal article" date="2011" name="Sci. Signal.">
        <title>System-wide temporal characterization of the proteome and phosphoproteome of human embryonic stem cell differentiation.</title>
        <authorList>
            <person name="Rigbolt K.T."/>
            <person name="Prokhorova T.A."/>
            <person name="Akimov V."/>
            <person name="Henningsen J."/>
            <person name="Johansen P.T."/>
            <person name="Kratchmarova I."/>
            <person name="Kassem M."/>
            <person name="Mann M."/>
            <person name="Olsen J.V."/>
            <person name="Blagoev B."/>
        </authorList>
    </citation>
    <scope>PHOSPHORYLATION [LARGE SCALE ANALYSIS] AT SER-14; SER-887 AND SER-1657</scope>
    <scope>IDENTIFICATION BY MASS SPECTROMETRY [LARGE SCALE ANALYSIS]</scope>
</reference>
<reference key="13">
    <citation type="journal article" date="2013" name="J. Proteome Res.">
        <title>Toward a comprehensive characterization of a human cancer cell phosphoproteome.</title>
        <authorList>
            <person name="Zhou H."/>
            <person name="Di Palma S."/>
            <person name="Preisinger C."/>
            <person name="Peng M."/>
            <person name="Polat A.N."/>
            <person name="Heck A.J."/>
            <person name="Mohammed S."/>
        </authorList>
    </citation>
    <scope>PHOSPHORYLATION [LARGE SCALE ANALYSIS] AT SER-14 AND SER-1657</scope>
    <scope>IDENTIFICATION BY MASS SPECTROMETRY [LARGE SCALE ANALYSIS]</scope>
    <source>
        <tissue>Cervix carcinoma</tissue>
    </source>
</reference>
<reference key="14">
    <citation type="journal article" date="2014" name="J. Proteomics">
        <title>An enzyme assisted RP-RPLC approach for in-depth analysis of human liver phosphoproteome.</title>
        <authorList>
            <person name="Bian Y."/>
            <person name="Song C."/>
            <person name="Cheng K."/>
            <person name="Dong M."/>
            <person name="Wang F."/>
            <person name="Huang J."/>
            <person name="Sun D."/>
            <person name="Wang L."/>
            <person name="Ye M."/>
            <person name="Zou H."/>
        </authorList>
    </citation>
    <scope>PHOSPHORYLATION [LARGE SCALE ANALYSIS] AT SER-465; SER-949; SER-1584 AND SER-1657</scope>
    <scope>IDENTIFICATION BY MASS SPECTROMETRY [LARGE SCALE ANALYSIS]</scope>
    <source>
        <tissue>Liver</tissue>
    </source>
</reference>
<keyword id="KW-0002">3D-structure</keyword>
<keyword id="KW-0965">Cell junction</keyword>
<keyword id="KW-1003">Cell membrane</keyword>
<keyword id="KW-0175">Coiled coil</keyword>
<keyword id="KW-0963">Cytoplasm</keyword>
<keyword id="KW-0206">Cytoskeleton</keyword>
<keyword id="KW-0417">Keratinization</keyword>
<keyword id="KW-0472">Membrane</keyword>
<keyword id="KW-0597">Phosphoprotein</keyword>
<keyword id="KW-1267">Proteomics identification</keyword>
<keyword id="KW-1185">Reference proteome</keyword>
<keyword id="KW-0677">Repeat</keyword>
<keyword id="KW-0728">SH3 domain</keyword>
<feature type="chain" id="PRO_0000078149" description="Periplakin">
    <location>
        <begin position="1"/>
        <end position="1756"/>
    </location>
</feature>
<feature type="repeat" description="Spectrin 1">
    <location>
        <begin position="216"/>
        <end position="317"/>
    </location>
</feature>
<feature type="repeat" description="Spectrin 2">
    <location>
        <begin position="323"/>
        <end position="485"/>
    </location>
</feature>
<feature type="domain" description="SH3" evidence="3">
    <location>
        <begin position="399"/>
        <end position="455"/>
    </location>
</feature>
<feature type="repeat" description="Spectrin 3">
    <location>
        <begin position="505"/>
        <end position="612"/>
    </location>
</feature>
<feature type="repeat" description="Spectrin 4">
    <location>
        <begin position="733"/>
        <end position="861"/>
    </location>
</feature>
<feature type="repeat" description="Plectin 1">
    <location>
        <begin position="1651"/>
        <end position="1685"/>
    </location>
</feature>
<feature type="repeat" description="Plectin 2">
    <location>
        <begin position="1700"/>
        <end position="1735"/>
    </location>
</feature>
<feature type="region of interest" description="Interacts with BFSP2 and VIM" evidence="1">
    <location>
        <begin position="1557"/>
        <end position="1756"/>
    </location>
</feature>
<feature type="coiled-coil region" evidence="2">
    <location>
        <begin position="16"/>
        <end position="125"/>
    </location>
</feature>
<feature type="coiled-coil region" evidence="2">
    <location>
        <begin position="188"/>
        <end position="389"/>
    </location>
</feature>
<feature type="coiled-coil region" evidence="2">
    <location>
        <begin position="585"/>
        <end position="820"/>
    </location>
</feature>
<feature type="coiled-coil region" evidence="2">
    <location>
        <begin position="886"/>
        <end position="1645"/>
    </location>
</feature>
<feature type="modified residue" description="Phosphoserine" evidence="14 15">
    <location>
        <position position="14"/>
    </location>
</feature>
<feature type="modified residue" description="Phosphoserine" evidence="16">
    <location>
        <position position="465"/>
    </location>
</feature>
<feature type="modified residue" description="Phosphoserine" evidence="14">
    <location>
        <position position="887"/>
    </location>
</feature>
<feature type="modified residue" description="Phosphoserine" evidence="16">
    <location>
        <position position="949"/>
    </location>
</feature>
<feature type="modified residue" description="Phosphoserine" evidence="16">
    <location>
        <position position="1584"/>
    </location>
</feature>
<feature type="modified residue" description="Phosphoserine" evidence="14 15 16">
    <location>
        <position position="1657"/>
    </location>
</feature>
<feature type="sequence variant" id="VAR_055125" description="In dbSNP:rs8063727.">
    <original>R</original>
    <variation>Q</variation>
    <location>
        <position position="520"/>
    </location>
</feature>
<feature type="sequence variant" id="VAR_055126" description="In dbSNP:rs35300633.">
    <original>A</original>
    <variation>S</variation>
    <location>
        <position position="572"/>
    </location>
</feature>
<feature type="sequence variant" id="VAR_055127" description="In dbSNP:rs1049205." evidence="8 9 11 12">
    <original>R</original>
    <variation>Q</variation>
    <location>
        <position position="589"/>
    </location>
</feature>
<feature type="sequence variant" id="VAR_055128" description="In dbSNP:rs34936263.">
    <original>H</original>
    <variation>Y</variation>
    <location>
        <position position="631"/>
    </location>
</feature>
<feature type="sequence variant" id="VAR_055129" description="In dbSNP:rs2734742." evidence="4 8 9 10 11 12">
    <original>R</original>
    <variation>S</variation>
    <location>
        <position position="819"/>
    </location>
</feature>
<feature type="sequence variant" id="VAR_055130" description="In dbSNP:rs35869286.">
    <original>E</original>
    <variation>Q</variation>
    <location>
        <position position="891"/>
    </location>
</feature>
<feature type="sequence variant" id="VAR_055131" description="In dbSNP:rs2075639.">
    <original>A</original>
    <variation>V</variation>
    <location>
        <position position="1007"/>
    </location>
</feature>
<feature type="sequence variant" id="VAR_055132" description="In dbSNP:rs12446946.">
    <original>E</original>
    <variation>Q</variation>
    <location>
        <position position="1199"/>
    </location>
</feature>
<feature type="sequence variant" id="VAR_055133" description="In dbSNP:rs2037912." evidence="8 11 12">
    <original>Q</original>
    <variation>E</variation>
    <location>
        <position position="1573"/>
    </location>
</feature>
<feature type="sequence variant" id="VAR_055134" description="In dbSNP:rs35865314.">
    <original>G</original>
    <variation>R</variation>
    <location>
        <position position="1754"/>
    </location>
</feature>
<feature type="sequence conflict" description="In Ref. 2; AAC39668 and 3; AAD17459." evidence="13" ref="2 3">
    <original>A</original>
    <variation>P</variation>
    <location>
        <position position="657"/>
    </location>
</feature>
<feature type="sequence conflict" description="In Ref. 1; AAC17738." evidence="13" ref="1">
    <original>V</original>
    <variation>F</variation>
    <location>
        <position position="994"/>
    </location>
</feature>
<feature type="sequence conflict" description="In Ref. 1; AAC17738." evidence="13" ref="1">
    <original>P</original>
    <variation>L</variation>
    <location>
        <position position="1663"/>
    </location>
</feature>
<feature type="strand" evidence="17">
    <location>
        <begin position="1655"/>
        <end position="1661"/>
    </location>
</feature>
<feature type="turn" evidence="17">
    <location>
        <begin position="1663"/>
        <end position="1665"/>
    </location>
</feature>
<feature type="helix" evidence="17">
    <location>
        <begin position="1671"/>
        <end position="1676"/>
    </location>
</feature>
<feature type="helix" evidence="17">
    <location>
        <begin position="1682"/>
        <end position="1689"/>
    </location>
</feature>
<feature type="strand" evidence="17">
    <location>
        <begin position="1693"/>
        <end position="1701"/>
    </location>
</feature>
<feature type="strand" evidence="17">
    <location>
        <begin position="1706"/>
        <end position="1712"/>
    </location>
</feature>
<feature type="turn" evidence="17">
    <location>
        <begin position="1713"/>
        <end position="1716"/>
    </location>
</feature>
<feature type="strand" evidence="17">
    <location>
        <begin position="1717"/>
        <end position="1721"/>
    </location>
</feature>
<feature type="helix" evidence="17">
    <location>
        <begin position="1722"/>
        <end position="1726"/>
    </location>
</feature>
<feature type="helix" evidence="17">
    <location>
        <begin position="1732"/>
        <end position="1739"/>
    </location>
</feature>
<feature type="helix" evidence="17">
    <location>
        <begin position="1745"/>
        <end position="1753"/>
    </location>
</feature>
<accession>O60437</accession>
<accession>O60314</accession>
<accession>O60454</accession>
<accession>Q14C98</accession>